<sequence length="505" mass="57575">MSEQNAQGADEVVDLNNEMKARREKLAALREQGIPFPNDFRRDRTSDQLHAEFDAKEAEELEALNIEVSVAGRMMTRRIMGKASFVTLQDVGGRIQLYVARDDLPEGVYNEQFKKWDLGDILGAKGKLFKTKTGELSIHCTELRLLTKALRPLPDKFHGLQDQEARYRQRYLDLISNDESRNTFKTRSKILAGIRQFMVARGFMEVETPMMQVIPGGASARPFITHHNALDLDMYLRIAPELYLKRLVVGGFERVFEINRNFRNEGISVRHNPEFTMMELYMAYADYKDLIELTESLFRTLAQDVLGTTQVPYGDEVFDFGKPFEKLTMREAIKKYRPETDMADLDNFDSAKAIAESIGIHVEKSWGLGRIVTEIFDEVAEAHLIQPTFITEYPAEVSPLARRNDVNPEITDRFEFFIGGREIGNGFSELNDAEDQAQRFLDQVNAKAAGDDEAMFYDEDYVTALEHGLPPTAGLGIGIDRMVMLFTNSHTIRDVILFPAMRPVK</sequence>
<proteinExistence type="inferred from homology"/>
<keyword id="KW-0030">Aminoacyl-tRNA synthetase</keyword>
<keyword id="KW-0067">ATP-binding</keyword>
<keyword id="KW-0963">Cytoplasm</keyword>
<keyword id="KW-0436">Ligase</keyword>
<keyword id="KW-0460">Magnesium</keyword>
<keyword id="KW-0479">Metal-binding</keyword>
<keyword id="KW-0547">Nucleotide-binding</keyword>
<keyword id="KW-0648">Protein biosynthesis</keyword>
<gene>
    <name evidence="1" type="primary">lysS</name>
    <name type="ordered locus">SG2935</name>
</gene>
<evidence type="ECO:0000255" key="1">
    <source>
        <dbReference type="HAMAP-Rule" id="MF_00252"/>
    </source>
</evidence>
<organism>
    <name type="scientific">Salmonella gallinarum (strain 287/91 / NCTC 13346)</name>
    <dbReference type="NCBI Taxonomy" id="550538"/>
    <lineage>
        <taxon>Bacteria</taxon>
        <taxon>Pseudomonadati</taxon>
        <taxon>Pseudomonadota</taxon>
        <taxon>Gammaproteobacteria</taxon>
        <taxon>Enterobacterales</taxon>
        <taxon>Enterobacteriaceae</taxon>
        <taxon>Salmonella</taxon>
    </lineage>
</organism>
<accession>B5RE01</accession>
<feature type="chain" id="PRO_1000101143" description="Lysine--tRNA ligase">
    <location>
        <begin position="1"/>
        <end position="505"/>
    </location>
</feature>
<feature type="binding site" evidence="1">
    <location>
        <position position="415"/>
    </location>
    <ligand>
        <name>Mg(2+)</name>
        <dbReference type="ChEBI" id="CHEBI:18420"/>
        <label>1</label>
    </ligand>
</feature>
<feature type="binding site" evidence="1">
    <location>
        <position position="422"/>
    </location>
    <ligand>
        <name>Mg(2+)</name>
        <dbReference type="ChEBI" id="CHEBI:18420"/>
        <label>1</label>
    </ligand>
</feature>
<feature type="binding site" evidence="1">
    <location>
        <position position="422"/>
    </location>
    <ligand>
        <name>Mg(2+)</name>
        <dbReference type="ChEBI" id="CHEBI:18420"/>
        <label>2</label>
    </ligand>
</feature>
<reference key="1">
    <citation type="journal article" date="2008" name="Genome Res.">
        <title>Comparative genome analysis of Salmonella enteritidis PT4 and Salmonella gallinarum 287/91 provides insights into evolutionary and host adaptation pathways.</title>
        <authorList>
            <person name="Thomson N.R."/>
            <person name="Clayton D.J."/>
            <person name="Windhorst D."/>
            <person name="Vernikos G."/>
            <person name="Davidson S."/>
            <person name="Churcher C."/>
            <person name="Quail M.A."/>
            <person name="Stevens M."/>
            <person name="Jones M.A."/>
            <person name="Watson M."/>
            <person name="Barron A."/>
            <person name="Layton A."/>
            <person name="Pickard D."/>
            <person name="Kingsley R.A."/>
            <person name="Bignell A."/>
            <person name="Clark L."/>
            <person name="Harris B."/>
            <person name="Ormond D."/>
            <person name="Abdellah Z."/>
            <person name="Brooks K."/>
            <person name="Cherevach I."/>
            <person name="Chillingworth T."/>
            <person name="Woodward J."/>
            <person name="Norberczak H."/>
            <person name="Lord A."/>
            <person name="Arrowsmith C."/>
            <person name="Jagels K."/>
            <person name="Moule S."/>
            <person name="Mungall K."/>
            <person name="Saunders M."/>
            <person name="Whitehead S."/>
            <person name="Chabalgoity J.A."/>
            <person name="Maskell D."/>
            <person name="Humphreys T."/>
            <person name="Roberts M."/>
            <person name="Barrow P.A."/>
            <person name="Dougan G."/>
            <person name="Parkhill J."/>
        </authorList>
    </citation>
    <scope>NUCLEOTIDE SEQUENCE [LARGE SCALE GENOMIC DNA]</scope>
    <source>
        <strain>287/91 / NCTC 13346</strain>
    </source>
</reference>
<protein>
    <recommendedName>
        <fullName evidence="1">Lysine--tRNA ligase</fullName>
        <ecNumber evidence="1">6.1.1.6</ecNumber>
    </recommendedName>
    <alternativeName>
        <fullName evidence="1">Lysyl-tRNA synthetase</fullName>
        <shortName evidence="1">LysRS</shortName>
    </alternativeName>
</protein>
<name>SYK_SALG2</name>
<comment type="catalytic activity">
    <reaction evidence="1">
        <text>tRNA(Lys) + L-lysine + ATP = L-lysyl-tRNA(Lys) + AMP + diphosphate</text>
        <dbReference type="Rhea" id="RHEA:20792"/>
        <dbReference type="Rhea" id="RHEA-COMP:9696"/>
        <dbReference type="Rhea" id="RHEA-COMP:9697"/>
        <dbReference type="ChEBI" id="CHEBI:30616"/>
        <dbReference type="ChEBI" id="CHEBI:32551"/>
        <dbReference type="ChEBI" id="CHEBI:33019"/>
        <dbReference type="ChEBI" id="CHEBI:78442"/>
        <dbReference type="ChEBI" id="CHEBI:78529"/>
        <dbReference type="ChEBI" id="CHEBI:456215"/>
        <dbReference type="EC" id="6.1.1.6"/>
    </reaction>
</comment>
<comment type="cofactor">
    <cofactor evidence="1">
        <name>Mg(2+)</name>
        <dbReference type="ChEBI" id="CHEBI:18420"/>
    </cofactor>
    <text evidence="1">Binds 3 Mg(2+) ions per subunit.</text>
</comment>
<comment type="subunit">
    <text evidence="1">Homodimer.</text>
</comment>
<comment type="subcellular location">
    <subcellularLocation>
        <location evidence="1">Cytoplasm</location>
    </subcellularLocation>
</comment>
<comment type="similarity">
    <text evidence="1">Belongs to the class-II aminoacyl-tRNA synthetase family.</text>
</comment>
<dbReference type="EC" id="6.1.1.6" evidence="1"/>
<dbReference type="EMBL" id="AM933173">
    <property type="protein sequence ID" value="CAR38740.1"/>
    <property type="molecule type" value="Genomic_DNA"/>
</dbReference>
<dbReference type="RefSeq" id="WP_000003339.1">
    <property type="nucleotide sequence ID" value="NC_011274.1"/>
</dbReference>
<dbReference type="SMR" id="B5RE01"/>
<dbReference type="KEGG" id="seg:SG2935"/>
<dbReference type="HOGENOM" id="CLU_008255_6_0_6"/>
<dbReference type="Proteomes" id="UP000008321">
    <property type="component" value="Chromosome"/>
</dbReference>
<dbReference type="GO" id="GO:0005829">
    <property type="term" value="C:cytosol"/>
    <property type="evidence" value="ECO:0007669"/>
    <property type="project" value="TreeGrafter"/>
</dbReference>
<dbReference type="GO" id="GO:0005524">
    <property type="term" value="F:ATP binding"/>
    <property type="evidence" value="ECO:0007669"/>
    <property type="project" value="UniProtKB-UniRule"/>
</dbReference>
<dbReference type="GO" id="GO:0004824">
    <property type="term" value="F:lysine-tRNA ligase activity"/>
    <property type="evidence" value="ECO:0007669"/>
    <property type="project" value="UniProtKB-UniRule"/>
</dbReference>
<dbReference type="GO" id="GO:0000287">
    <property type="term" value="F:magnesium ion binding"/>
    <property type="evidence" value="ECO:0007669"/>
    <property type="project" value="UniProtKB-UniRule"/>
</dbReference>
<dbReference type="GO" id="GO:0000049">
    <property type="term" value="F:tRNA binding"/>
    <property type="evidence" value="ECO:0007669"/>
    <property type="project" value="TreeGrafter"/>
</dbReference>
<dbReference type="GO" id="GO:0006430">
    <property type="term" value="P:lysyl-tRNA aminoacylation"/>
    <property type="evidence" value="ECO:0007669"/>
    <property type="project" value="UniProtKB-UniRule"/>
</dbReference>
<dbReference type="CDD" id="cd00775">
    <property type="entry name" value="LysRS_core"/>
    <property type="match status" value="1"/>
</dbReference>
<dbReference type="CDD" id="cd04322">
    <property type="entry name" value="LysRS_N"/>
    <property type="match status" value="1"/>
</dbReference>
<dbReference type="FunFam" id="2.40.50.140:FF:000024">
    <property type="entry name" value="Lysine--tRNA ligase"/>
    <property type="match status" value="1"/>
</dbReference>
<dbReference type="FunFam" id="3.30.930.10:FF:000001">
    <property type="entry name" value="Lysine--tRNA ligase"/>
    <property type="match status" value="1"/>
</dbReference>
<dbReference type="Gene3D" id="3.30.930.10">
    <property type="entry name" value="Bira Bifunctional Protein, Domain 2"/>
    <property type="match status" value="1"/>
</dbReference>
<dbReference type="Gene3D" id="2.40.50.140">
    <property type="entry name" value="Nucleic acid-binding proteins"/>
    <property type="match status" value="1"/>
</dbReference>
<dbReference type="HAMAP" id="MF_00252">
    <property type="entry name" value="Lys_tRNA_synth_class2"/>
    <property type="match status" value="1"/>
</dbReference>
<dbReference type="InterPro" id="IPR004364">
    <property type="entry name" value="Aa-tRNA-synt_II"/>
</dbReference>
<dbReference type="InterPro" id="IPR006195">
    <property type="entry name" value="aa-tRNA-synth_II"/>
</dbReference>
<dbReference type="InterPro" id="IPR045864">
    <property type="entry name" value="aa-tRNA-synth_II/BPL/LPL"/>
</dbReference>
<dbReference type="InterPro" id="IPR002313">
    <property type="entry name" value="Lys-tRNA-ligase_II"/>
</dbReference>
<dbReference type="InterPro" id="IPR034762">
    <property type="entry name" value="Lys-tRNA-ligase_II_bac/euk"/>
</dbReference>
<dbReference type="InterPro" id="IPR044136">
    <property type="entry name" value="Lys-tRNA-ligase_II_N"/>
</dbReference>
<dbReference type="InterPro" id="IPR018149">
    <property type="entry name" value="Lys-tRNA-synth_II_C"/>
</dbReference>
<dbReference type="InterPro" id="IPR012340">
    <property type="entry name" value="NA-bd_OB-fold"/>
</dbReference>
<dbReference type="InterPro" id="IPR004365">
    <property type="entry name" value="NA-bd_OB_tRNA"/>
</dbReference>
<dbReference type="NCBIfam" id="TIGR00499">
    <property type="entry name" value="lysS_bact"/>
    <property type="match status" value="1"/>
</dbReference>
<dbReference type="NCBIfam" id="NF001756">
    <property type="entry name" value="PRK00484.1"/>
    <property type="match status" value="1"/>
</dbReference>
<dbReference type="NCBIfam" id="NF009101">
    <property type="entry name" value="PRK12445.1"/>
    <property type="match status" value="1"/>
</dbReference>
<dbReference type="PANTHER" id="PTHR42918:SF15">
    <property type="entry name" value="LYSINE--TRNA LIGASE, CHLOROPLASTIC_MITOCHONDRIAL"/>
    <property type="match status" value="1"/>
</dbReference>
<dbReference type="PANTHER" id="PTHR42918">
    <property type="entry name" value="LYSYL-TRNA SYNTHETASE"/>
    <property type="match status" value="1"/>
</dbReference>
<dbReference type="Pfam" id="PF00152">
    <property type="entry name" value="tRNA-synt_2"/>
    <property type="match status" value="1"/>
</dbReference>
<dbReference type="Pfam" id="PF01336">
    <property type="entry name" value="tRNA_anti-codon"/>
    <property type="match status" value="1"/>
</dbReference>
<dbReference type="PIRSF" id="PIRSF039101">
    <property type="entry name" value="LysRS2"/>
    <property type="match status" value="1"/>
</dbReference>
<dbReference type="PRINTS" id="PR00982">
    <property type="entry name" value="TRNASYNTHLYS"/>
</dbReference>
<dbReference type="SUPFAM" id="SSF55681">
    <property type="entry name" value="Class II aaRS and biotin synthetases"/>
    <property type="match status" value="1"/>
</dbReference>
<dbReference type="SUPFAM" id="SSF50249">
    <property type="entry name" value="Nucleic acid-binding proteins"/>
    <property type="match status" value="1"/>
</dbReference>
<dbReference type="PROSITE" id="PS50862">
    <property type="entry name" value="AA_TRNA_LIGASE_II"/>
    <property type="match status" value="1"/>
</dbReference>